<sequence length="376" mass="42248">MKVLTVFGTRPEAIKMAPLVHALAKDPFFEAKVCVTAQHREMLDQVLKLFSIVPDYDLNIMQPGQGLTEITCRILEGLKPILAEFKPDVVLVHGDTTTTLATSLAAFYQRIPVGHVEAGLRTGDLYSPWPEEANRTLTGHLAMYHFSPTETSRQNLLRENVADSRIFITGNTVIDALLWVRDQVMSSDTLRSELAANYPFIDPDKKMILVTGHRRESFGRGFEEICHALADIATTHQDIQIVYPVHLNPNVREPVNRILGHVKNVILIDPQEYLPFVWLMNHAWLILTDSGGIQEEAPSLGKPVLVMRDTTERPEAVTAGTVRLVGTDKQRIVEEVTRLLKDENEYQTMSRAHNPYGDGQACSRILEALKNNRISL</sequence>
<name>WECB_ECO57</name>
<comment type="function">
    <text evidence="1">Catalyzes the reversible epimerization at C-2 of UDP-N-acetylglucosamine (UDP-GlcNAc) and thereby provides bacteria with UDP-N-acetylmannosamine (UDP-ManNAc), the activated donor of ManNAc residues.</text>
</comment>
<comment type="catalytic activity">
    <reaction evidence="1">
        <text>UDP-N-acetyl-alpha-D-glucosamine = UDP-N-acetyl-alpha-D-mannosamine</text>
        <dbReference type="Rhea" id="RHEA:17213"/>
        <dbReference type="ChEBI" id="CHEBI:57705"/>
        <dbReference type="ChEBI" id="CHEBI:68623"/>
        <dbReference type="EC" id="5.1.3.14"/>
    </reaction>
</comment>
<comment type="pathway">
    <text evidence="1">Bacterial outer membrane biogenesis; enterobacterial common antigen biosynthesis.</text>
</comment>
<comment type="subunit">
    <text evidence="1">Homodimer.</text>
</comment>
<comment type="subcellular location">
    <subcellularLocation>
        <location evidence="1">Cytoplasm</location>
    </subcellularLocation>
</comment>
<comment type="similarity">
    <text evidence="1">Belongs to the UDP-N-acetylglucosamine 2-epimerase family.</text>
</comment>
<comment type="sequence caution" evidence="2">
    <conflict type="erroneous initiation">
        <sequence resource="EMBL-CDS" id="AAG58981"/>
    </conflict>
    <text>Extended N-terminus.</text>
</comment>
<evidence type="ECO:0000255" key="1">
    <source>
        <dbReference type="HAMAP-Rule" id="MF_02028"/>
    </source>
</evidence>
<evidence type="ECO:0000305" key="2"/>
<reference key="1">
    <citation type="journal article" date="2001" name="Nature">
        <title>Genome sequence of enterohaemorrhagic Escherichia coli O157:H7.</title>
        <authorList>
            <person name="Perna N.T."/>
            <person name="Plunkett G. III"/>
            <person name="Burland V."/>
            <person name="Mau B."/>
            <person name="Glasner J.D."/>
            <person name="Rose D.J."/>
            <person name="Mayhew G.F."/>
            <person name="Evans P.S."/>
            <person name="Gregor J."/>
            <person name="Kirkpatrick H.A."/>
            <person name="Posfai G."/>
            <person name="Hackett J."/>
            <person name="Klink S."/>
            <person name="Boutin A."/>
            <person name="Shao Y."/>
            <person name="Miller L."/>
            <person name="Grotbeck E.J."/>
            <person name="Davis N.W."/>
            <person name="Lim A."/>
            <person name="Dimalanta E.T."/>
            <person name="Potamousis K."/>
            <person name="Apodaca J."/>
            <person name="Anantharaman T.S."/>
            <person name="Lin J."/>
            <person name="Yen G."/>
            <person name="Schwartz D.C."/>
            <person name="Welch R.A."/>
            <person name="Blattner F.R."/>
        </authorList>
    </citation>
    <scope>NUCLEOTIDE SEQUENCE [LARGE SCALE GENOMIC DNA]</scope>
    <source>
        <strain>O157:H7 / EDL933 / ATCC 700927 / EHEC</strain>
    </source>
</reference>
<reference key="2">
    <citation type="journal article" date="2001" name="DNA Res.">
        <title>Complete genome sequence of enterohemorrhagic Escherichia coli O157:H7 and genomic comparison with a laboratory strain K-12.</title>
        <authorList>
            <person name="Hayashi T."/>
            <person name="Makino K."/>
            <person name="Ohnishi M."/>
            <person name="Kurokawa K."/>
            <person name="Ishii K."/>
            <person name="Yokoyama K."/>
            <person name="Han C.-G."/>
            <person name="Ohtsubo E."/>
            <person name="Nakayama K."/>
            <person name="Murata T."/>
            <person name="Tanaka M."/>
            <person name="Tobe T."/>
            <person name="Iida T."/>
            <person name="Takami H."/>
            <person name="Honda T."/>
            <person name="Sasakawa C."/>
            <person name="Ogasawara N."/>
            <person name="Yasunaga T."/>
            <person name="Kuhara S."/>
            <person name="Shiba T."/>
            <person name="Hattori M."/>
            <person name="Shinagawa H."/>
        </authorList>
    </citation>
    <scope>NUCLEOTIDE SEQUENCE [LARGE SCALE GENOMIC DNA]</scope>
    <source>
        <strain>O157:H7 / Sakai / RIMD 0509952 / EHEC</strain>
    </source>
</reference>
<organism>
    <name type="scientific">Escherichia coli O157:H7</name>
    <dbReference type="NCBI Taxonomy" id="83334"/>
    <lineage>
        <taxon>Bacteria</taxon>
        <taxon>Pseudomonadati</taxon>
        <taxon>Pseudomonadota</taxon>
        <taxon>Gammaproteobacteria</taxon>
        <taxon>Enterobacterales</taxon>
        <taxon>Enterobacteriaceae</taxon>
        <taxon>Escherichia</taxon>
    </lineage>
</organism>
<dbReference type="EC" id="5.1.3.14" evidence="1"/>
<dbReference type="EMBL" id="AE005174">
    <property type="protein sequence ID" value="AAG58981.1"/>
    <property type="status" value="ALT_INIT"/>
    <property type="molecule type" value="Genomic_DNA"/>
</dbReference>
<dbReference type="EMBL" id="BA000007">
    <property type="protein sequence ID" value="BAB38142.2"/>
    <property type="molecule type" value="Genomic_DNA"/>
</dbReference>
<dbReference type="PIR" id="A86065">
    <property type="entry name" value="A86065"/>
</dbReference>
<dbReference type="PIR" id="G91218">
    <property type="entry name" value="G91218"/>
</dbReference>
<dbReference type="RefSeq" id="NP_312746.2">
    <property type="nucleotide sequence ID" value="NC_002695.1"/>
</dbReference>
<dbReference type="RefSeq" id="WP_000866672.1">
    <property type="nucleotide sequence ID" value="NZ_VOAI01000017.1"/>
</dbReference>
<dbReference type="SMR" id="Q8XAR8"/>
<dbReference type="STRING" id="155864.Z5297"/>
<dbReference type="GeneID" id="915240"/>
<dbReference type="GeneID" id="93778158"/>
<dbReference type="KEGG" id="ece:Z5297"/>
<dbReference type="KEGG" id="ecs:ECs_4719"/>
<dbReference type="PATRIC" id="fig|386585.9.peg.4923"/>
<dbReference type="eggNOG" id="COG0381">
    <property type="taxonomic scope" value="Bacteria"/>
</dbReference>
<dbReference type="HOGENOM" id="CLU_041674_1_0_6"/>
<dbReference type="OMA" id="CLTLRYN"/>
<dbReference type="SABIO-RK" id="Q8XAR8"/>
<dbReference type="UniPathway" id="UPA00566"/>
<dbReference type="Proteomes" id="UP000000558">
    <property type="component" value="Chromosome"/>
</dbReference>
<dbReference type="Proteomes" id="UP000002519">
    <property type="component" value="Chromosome"/>
</dbReference>
<dbReference type="GO" id="GO:0005737">
    <property type="term" value="C:cytoplasm"/>
    <property type="evidence" value="ECO:0007669"/>
    <property type="project" value="UniProtKB-SubCell"/>
</dbReference>
<dbReference type="GO" id="GO:0008761">
    <property type="term" value="F:UDP-N-acetylglucosamine 2-epimerase activity"/>
    <property type="evidence" value="ECO:0007669"/>
    <property type="project" value="UniProtKB-UniRule"/>
</dbReference>
<dbReference type="GO" id="GO:0009246">
    <property type="term" value="P:enterobacterial common antigen biosynthetic process"/>
    <property type="evidence" value="ECO:0007669"/>
    <property type="project" value="UniProtKB-UniRule"/>
</dbReference>
<dbReference type="CDD" id="cd03786">
    <property type="entry name" value="GTB_UDP-GlcNAc_2-Epimerase"/>
    <property type="match status" value="1"/>
</dbReference>
<dbReference type="FunFam" id="3.40.50.2000:FF:000043">
    <property type="entry name" value="UDP-N-acetylglucosamine 2-epimerase"/>
    <property type="match status" value="1"/>
</dbReference>
<dbReference type="FunFam" id="3.40.50.2000:FF:000068">
    <property type="entry name" value="UDP-N-acetylglucosamine 2-epimerase"/>
    <property type="match status" value="1"/>
</dbReference>
<dbReference type="Gene3D" id="3.40.50.2000">
    <property type="entry name" value="Glycogen Phosphorylase B"/>
    <property type="match status" value="2"/>
</dbReference>
<dbReference type="HAMAP" id="MF_02028">
    <property type="entry name" value="WecB_RffE"/>
    <property type="match status" value="1"/>
</dbReference>
<dbReference type="InterPro" id="IPR003331">
    <property type="entry name" value="UDP_GlcNAc_Epimerase_2_dom"/>
</dbReference>
<dbReference type="InterPro" id="IPR032892">
    <property type="entry name" value="WecB"/>
</dbReference>
<dbReference type="InterPro" id="IPR029767">
    <property type="entry name" value="WecB-like"/>
</dbReference>
<dbReference type="NCBIfam" id="TIGR00236">
    <property type="entry name" value="wecB"/>
    <property type="match status" value="1"/>
</dbReference>
<dbReference type="PANTHER" id="PTHR43174">
    <property type="entry name" value="UDP-N-ACETYLGLUCOSAMINE 2-EPIMERASE"/>
    <property type="match status" value="1"/>
</dbReference>
<dbReference type="PANTHER" id="PTHR43174:SF2">
    <property type="entry name" value="UDP-N-ACETYLGLUCOSAMINE 2-EPIMERASE"/>
    <property type="match status" value="1"/>
</dbReference>
<dbReference type="Pfam" id="PF02350">
    <property type="entry name" value="Epimerase_2"/>
    <property type="match status" value="1"/>
</dbReference>
<dbReference type="SUPFAM" id="SSF53756">
    <property type="entry name" value="UDP-Glycosyltransferase/glycogen phosphorylase"/>
    <property type="match status" value="1"/>
</dbReference>
<feature type="chain" id="PRO_0000208528" description="UDP-N-acetylglucosamine 2-epimerase">
    <location>
        <begin position="1"/>
        <end position="376"/>
    </location>
</feature>
<feature type="binding site" evidence="1">
    <location>
        <position position="10"/>
    </location>
    <ligand>
        <name>substrate</name>
    </ligand>
</feature>
<feature type="binding site" evidence="1">
    <location>
        <position position="15"/>
    </location>
    <ligand>
        <name>substrate</name>
    </ligand>
</feature>
<feature type="binding site" evidence="1">
    <location>
        <position position="95"/>
    </location>
    <ligand>
        <name>substrate</name>
    </ligand>
</feature>
<feature type="binding site" evidence="1">
    <location>
        <position position="117"/>
    </location>
    <ligand>
        <name>substrate</name>
    </ligand>
</feature>
<feature type="binding site" evidence="1">
    <location>
        <position position="213"/>
    </location>
    <ligand>
        <name>substrate</name>
    </ligand>
</feature>
<feature type="binding site" evidence="1">
    <location>
        <position position="271"/>
    </location>
    <ligand>
        <name>substrate</name>
    </ligand>
</feature>
<feature type="binding site" evidence="1">
    <location>
        <position position="276"/>
    </location>
    <ligand>
        <name>substrate</name>
    </ligand>
</feature>
<feature type="binding site" evidence="1">
    <location>
        <begin position="290"/>
        <end position="292"/>
    </location>
    <ligand>
        <name>substrate</name>
    </ligand>
</feature>
<feature type="binding site" evidence="1">
    <location>
        <position position="296"/>
    </location>
    <ligand>
        <name>substrate</name>
    </ligand>
</feature>
<feature type="binding site" evidence="1">
    <location>
        <position position="313"/>
    </location>
    <ligand>
        <name>substrate</name>
    </ligand>
</feature>
<keyword id="KW-0963">Cytoplasm</keyword>
<keyword id="KW-0413">Isomerase</keyword>
<keyword id="KW-1185">Reference proteome</keyword>
<gene>
    <name evidence="1" type="primary">wecB</name>
    <name type="synonym">nfrC</name>
    <name type="synonym">rffE</name>
    <name type="ordered locus">Z5297</name>
    <name type="ordered locus">ECs4719</name>
</gene>
<protein>
    <recommendedName>
        <fullName evidence="1">UDP-N-acetylglucosamine 2-epimerase</fullName>
        <ecNumber evidence="1">5.1.3.14</ecNumber>
    </recommendedName>
    <alternativeName>
        <fullName evidence="1">UDP-GlcNAc-2-epimerase</fullName>
    </alternativeName>
</protein>
<proteinExistence type="inferred from homology"/>
<accession>Q8XAR8</accession>